<comment type="function">
    <text evidence="1">Required for the insertion and/or proper folding and/or complex formation of integral membrane proteins into the membrane. Involved in integration of membrane proteins that insert both dependently and independently of the Sec translocase complex, as well as at least some lipoproteins. Aids folding of multispanning membrane proteins.</text>
</comment>
<comment type="subunit">
    <text evidence="1">Interacts with the Sec translocase complex via SecD. Specifically interacts with transmembrane segments of nascent integral membrane proteins during membrane integration.</text>
</comment>
<comment type="subcellular location">
    <subcellularLocation>
        <location evidence="1">Cell inner membrane</location>
        <topology evidence="1">Multi-pass membrane protein</topology>
    </subcellularLocation>
</comment>
<comment type="similarity">
    <text evidence="1">Belongs to the OXA1/ALB3/YidC family. Type 1 subfamily.</text>
</comment>
<proteinExistence type="inferred from homology"/>
<feature type="chain" id="PRO_1000070182" description="Membrane protein insertase YidC">
    <location>
        <begin position="1"/>
        <end position="544"/>
    </location>
</feature>
<feature type="transmembrane region" description="Helical" evidence="1">
    <location>
        <begin position="4"/>
        <end position="24"/>
    </location>
</feature>
<feature type="transmembrane region" description="Helical" evidence="1">
    <location>
        <begin position="363"/>
        <end position="383"/>
    </location>
</feature>
<feature type="transmembrane region" description="Helical" evidence="1">
    <location>
        <begin position="434"/>
        <end position="454"/>
    </location>
</feature>
<feature type="transmembrane region" description="Helical" evidence="1">
    <location>
        <begin position="508"/>
        <end position="528"/>
    </location>
</feature>
<feature type="region of interest" description="Disordered" evidence="2">
    <location>
        <begin position="44"/>
        <end position="78"/>
    </location>
</feature>
<organism>
    <name type="scientific">Syntrophus aciditrophicus (strain SB)</name>
    <dbReference type="NCBI Taxonomy" id="56780"/>
    <lineage>
        <taxon>Bacteria</taxon>
        <taxon>Pseudomonadati</taxon>
        <taxon>Thermodesulfobacteriota</taxon>
        <taxon>Syntrophia</taxon>
        <taxon>Syntrophales</taxon>
        <taxon>Syntrophaceae</taxon>
        <taxon>Syntrophus</taxon>
    </lineage>
</organism>
<evidence type="ECO:0000255" key="1">
    <source>
        <dbReference type="HAMAP-Rule" id="MF_01810"/>
    </source>
</evidence>
<evidence type="ECO:0000256" key="2">
    <source>
        <dbReference type="SAM" id="MobiDB-lite"/>
    </source>
</evidence>
<protein>
    <recommendedName>
        <fullName evidence="1">Membrane protein insertase YidC</fullName>
    </recommendedName>
    <alternativeName>
        <fullName evidence="1">Foldase YidC</fullName>
    </alternativeName>
    <alternativeName>
        <fullName evidence="1">Membrane integrase YidC</fullName>
    </alternativeName>
    <alternativeName>
        <fullName evidence="1">Membrane protein YidC</fullName>
    </alternativeName>
</protein>
<dbReference type="EMBL" id="CP000252">
    <property type="protein sequence ID" value="ABC77019.1"/>
    <property type="molecule type" value="Genomic_DNA"/>
</dbReference>
<dbReference type="RefSeq" id="WP_011417048.1">
    <property type="nucleotide sequence ID" value="NC_007759.1"/>
</dbReference>
<dbReference type="SMR" id="Q2LSF9"/>
<dbReference type="FunCoup" id="Q2LSF9">
    <property type="interactions" value="246"/>
</dbReference>
<dbReference type="STRING" id="56780.SYN_01014"/>
<dbReference type="KEGG" id="sat:SYN_01014"/>
<dbReference type="eggNOG" id="COG0706">
    <property type="taxonomic scope" value="Bacteria"/>
</dbReference>
<dbReference type="HOGENOM" id="CLU_016535_3_0_7"/>
<dbReference type="InParanoid" id="Q2LSF9"/>
<dbReference type="OrthoDB" id="9780552at2"/>
<dbReference type="Proteomes" id="UP000001933">
    <property type="component" value="Chromosome"/>
</dbReference>
<dbReference type="GO" id="GO:0005886">
    <property type="term" value="C:plasma membrane"/>
    <property type="evidence" value="ECO:0007669"/>
    <property type="project" value="UniProtKB-SubCell"/>
</dbReference>
<dbReference type="GO" id="GO:0032977">
    <property type="term" value="F:membrane insertase activity"/>
    <property type="evidence" value="ECO:0007669"/>
    <property type="project" value="InterPro"/>
</dbReference>
<dbReference type="GO" id="GO:0051205">
    <property type="term" value="P:protein insertion into membrane"/>
    <property type="evidence" value="ECO:0007669"/>
    <property type="project" value="TreeGrafter"/>
</dbReference>
<dbReference type="GO" id="GO:0015031">
    <property type="term" value="P:protein transport"/>
    <property type="evidence" value="ECO:0007669"/>
    <property type="project" value="UniProtKB-KW"/>
</dbReference>
<dbReference type="CDD" id="cd20070">
    <property type="entry name" value="5TM_YidC_Alb3"/>
    <property type="match status" value="1"/>
</dbReference>
<dbReference type="CDD" id="cd19961">
    <property type="entry name" value="EcYidC-like_peri"/>
    <property type="match status" value="1"/>
</dbReference>
<dbReference type="Gene3D" id="2.70.98.90">
    <property type="match status" value="1"/>
</dbReference>
<dbReference type="HAMAP" id="MF_01810">
    <property type="entry name" value="YidC_type1"/>
    <property type="match status" value="1"/>
</dbReference>
<dbReference type="InterPro" id="IPR019998">
    <property type="entry name" value="Membr_insert_YidC"/>
</dbReference>
<dbReference type="InterPro" id="IPR028053">
    <property type="entry name" value="Membr_insert_YidC_N"/>
</dbReference>
<dbReference type="InterPro" id="IPR001708">
    <property type="entry name" value="YidC/ALB3/OXA1/COX18"/>
</dbReference>
<dbReference type="InterPro" id="IPR028055">
    <property type="entry name" value="YidC/Oxa/ALB_C"/>
</dbReference>
<dbReference type="InterPro" id="IPR047196">
    <property type="entry name" value="YidC_ALB_C"/>
</dbReference>
<dbReference type="InterPro" id="IPR038221">
    <property type="entry name" value="YidC_periplasmic_sf"/>
</dbReference>
<dbReference type="NCBIfam" id="NF002352">
    <property type="entry name" value="PRK01318.1-3"/>
    <property type="match status" value="1"/>
</dbReference>
<dbReference type="NCBIfam" id="NF002353">
    <property type="entry name" value="PRK01318.1-4"/>
    <property type="match status" value="1"/>
</dbReference>
<dbReference type="NCBIfam" id="TIGR03593">
    <property type="entry name" value="yidC_nterm"/>
    <property type="match status" value="1"/>
</dbReference>
<dbReference type="NCBIfam" id="TIGR03592">
    <property type="entry name" value="yidC_oxa1_cterm"/>
    <property type="match status" value="1"/>
</dbReference>
<dbReference type="PANTHER" id="PTHR12428:SF65">
    <property type="entry name" value="CYTOCHROME C OXIDASE ASSEMBLY PROTEIN COX18, MITOCHONDRIAL"/>
    <property type="match status" value="1"/>
</dbReference>
<dbReference type="PANTHER" id="PTHR12428">
    <property type="entry name" value="OXA1"/>
    <property type="match status" value="1"/>
</dbReference>
<dbReference type="Pfam" id="PF02096">
    <property type="entry name" value="60KD_IMP"/>
    <property type="match status" value="1"/>
</dbReference>
<dbReference type="Pfam" id="PF14849">
    <property type="entry name" value="YidC_periplas"/>
    <property type="match status" value="1"/>
</dbReference>
<dbReference type="PRINTS" id="PR00701">
    <property type="entry name" value="60KDINNERMP"/>
</dbReference>
<dbReference type="PRINTS" id="PR01900">
    <property type="entry name" value="YIDCPROTEIN"/>
</dbReference>
<sequence>MDKKALLALVLSAAVLLIYQIFIYKTTPPPKPVNENKSNTVVVNPAAPVSPQTPADEPSSGSAANPETAAALPVDGTEKEQEITVDTPLYQAVFTTKGGALKSFALKNYRETLAVNSKPIELVDVKEAMPYPLGISFPASSVDVSPASFFKADVPAIDLKSTSESRRLTFVQTWPGKIKIEKIYTFNPGKYAIDLEIRTYNLSEVPLSQEIALFWNQYVDPSAKEDSYGHTGPVSYVAKDVEREKVTKMETPKSLGPDVSWGGFESKYFIAAMIPQNPSLTSLSLSKDSSNMVSTSLKGPKNIIPPGQAGFFTYKLFLGPKDYNILKAQGVGLENAIDFGSWLKWLAMPLLLSLKFLYNYVHNYGIAIIILTILIKILFWPLGNKSYKSMKEMQKLQPKMLELREKYKNDKARLSQETMALYKAYKVNPMGGCLPMIIQIPVFFGLYKALLYAIELRHSPFFLWIQDLSAKDPYYITPIIMGATMFLQQKMTPVSGDPTQAKIMLWMPVIFTFMFLNFPSGLVIYWLFNNILSIGQQYYINKQA</sequence>
<reference key="1">
    <citation type="journal article" date="2007" name="Proc. Natl. Acad. Sci. U.S.A.">
        <title>The genome of Syntrophus aciditrophicus: life at the thermodynamic limit of microbial growth.</title>
        <authorList>
            <person name="McInerney M.J."/>
            <person name="Rohlin L."/>
            <person name="Mouttaki H."/>
            <person name="Kim U."/>
            <person name="Krupp R.S."/>
            <person name="Rios-Hernandez L."/>
            <person name="Sieber J."/>
            <person name="Struchtemeyer C.G."/>
            <person name="Bhattacharyya A."/>
            <person name="Campbell J.W."/>
            <person name="Gunsalus R.P."/>
        </authorList>
    </citation>
    <scope>NUCLEOTIDE SEQUENCE [LARGE SCALE GENOMIC DNA]</scope>
    <source>
        <strain>SB</strain>
    </source>
</reference>
<gene>
    <name evidence="1" type="primary">yidC</name>
    <name type="ordered locus">SYNAS_11400</name>
    <name type="ORF">SYN_01014</name>
</gene>
<name>YIDC_SYNAS</name>
<keyword id="KW-0997">Cell inner membrane</keyword>
<keyword id="KW-1003">Cell membrane</keyword>
<keyword id="KW-0143">Chaperone</keyword>
<keyword id="KW-0472">Membrane</keyword>
<keyword id="KW-0653">Protein transport</keyword>
<keyword id="KW-1185">Reference proteome</keyword>
<keyword id="KW-0812">Transmembrane</keyword>
<keyword id="KW-1133">Transmembrane helix</keyword>
<keyword id="KW-0813">Transport</keyword>
<accession>Q2LSF9</accession>